<dbReference type="EMBL" id="M90677">
    <property type="protein sequence ID" value="AAA27065.1"/>
    <property type="molecule type" value="Genomic_DNA"/>
</dbReference>
<dbReference type="EMBL" id="L19338">
    <property type="protein sequence ID" value="AAA75422.1"/>
    <property type="molecule type" value="Genomic_DNA"/>
</dbReference>
<dbReference type="EMBL" id="AE006468">
    <property type="protein sequence ID" value="AAL19503.1"/>
    <property type="molecule type" value="Genomic_DNA"/>
</dbReference>
<dbReference type="PIR" id="B45273">
    <property type="entry name" value="B45273"/>
</dbReference>
<dbReference type="RefSeq" id="NP_459544.1">
    <property type="nucleotide sequence ID" value="NC_003197.2"/>
</dbReference>
<dbReference type="RefSeq" id="WP_000801273.1">
    <property type="nucleotide sequence ID" value="NC_003197.2"/>
</dbReference>
<dbReference type="SMR" id="P26319"/>
<dbReference type="STRING" id="99287.STM0549"/>
<dbReference type="PaxDb" id="99287-STM0549"/>
<dbReference type="GeneID" id="1252069"/>
<dbReference type="KEGG" id="stm:STM0549"/>
<dbReference type="PATRIC" id="fig|99287.12.peg.582"/>
<dbReference type="HOGENOM" id="CLU_000445_90_1_6"/>
<dbReference type="OMA" id="IRQWDGA"/>
<dbReference type="PhylomeDB" id="P26319"/>
<dbReference type="BioCyc" id="SENT99287:STM0549-MONOMER"/>
<dbReference type="Proteomes" id="UP000001014">
    <property type="component" value="Chromosome"/>
</dbReference>
<dbReference type="GO" id="GO:0005737">
    <property type="term" value="C:cytoplasm"/>
    <property type="evidence" value="ECO:0007669"/>
    <property type="project" value="UniProtKB-SubCell"/>
</dbReference>
<dbReference type="GO" id="GO:0003677">
    <property type="term" value="F:DNA binding"/>
    <property type="evidence" value="ECO:0007669"/>
    <property type="project" value="UniProtKB-KW"/>
</dbReference>
<dbReference type="GO" id="GO:0000160">
    <property type="term" value="P:phosphorelay signal transduction system"/>
    <property type="evidence" value="ECO:0007669"/>
    <property type="project" value="UniProtKB-KW"/>
</dbReference>
<dbReference type="GO" id="GO:0006355">
    <property type="term" value="P:regulation of DNA-templated transcription"/>
    <property type="evidence" value="ECO:0007669"/>
    <property type="project" value="InterPro"/>
</dbReference>
<dbReference type="CDD" id="cd06170">
    <property type="entry name" value="LuxR_C_like"/>
    <property type="match status" value="1"/>
</dbReference>
<dbReference type="CDD" id="cd17535">
    <property type="entry name" value="REC_NarL-like"/>
    <property type="match status" value="1"/>
</dbReference>
<dbReference type="Gene3D" id="3.40.50.2300">
    <property type="match status" value="1"/>
</dbReference>
<dbReference type="InterPro" id="IPR011006">
    <property type="entry name" value="CheY-like_superfamily"/>
</dbReference>
<dbReference type="InterPro" id="IPR016032">
    <property type="entry name" value="Sig_transdc_resp-reg_C-effctor"/>
</dbReference>
<dbReference type="InterPro" id="IPR001789">
    <property type="entry name" value="Sig_transdc_resp-reg_receiver"/>
</dbReference>
<dbReference type="InterPro" id="IPR000792">
    <property type="entry name" value="Tscrpt_reg_LuxR_C"/>
</dbReference>
<dbReference type="InterPro" id="IPR039420">
    <property type="entry name" value="WalR-like"/>
</dbReference>
<dbReference type="NCBIfam" id="NF007403">
    <property type="entry name" value="PRK09935.1"/>
    <property type="match status" value="1"/>
</dbReference>
<dbReference type="PANTHER" id="PTHR43214:SF41">
    <property type="entry name" value="NITRATE_NITRITE RESPONSE REGULATOR PROTEIN NARP"/>
    <property type="match status" value="1"/>
</dbReference>
<dbReference type="PANTHER" id="PTHR43214">
    <property type="entry name" value="TWO-COMPONENT RESPONSE REGULATOR"/>
    <property type="match status" value="1"/>
</dbReference>
<dbReference type="Pfam" id="PF00196">
    <property type="entry name" value="GerE"/>
    <property type="match status" value="1"/>
</dbReference>
<dbReference type="Pfam" id="PF00072">
    <property type="entry name" value="Response_reg"/>
    <property type="match status" value="1"/>
</dbReference>
<dbReference type="PRINTS" id="PR00038">
    <property type="entry name" value="HTHLUXR"/>
</dbReference>
<dbReference type="SMART" id="SM00421">
    <property type="entry name" value="HTH_LUXR"/>
    <property type="match status" value="1"/>
</dbReference>
<dbReference type="SMART" id="SM00448">
    <property type="entry name" value="REC"/>
    <property type="match status" value="1"/>
</dbReference>
<dbReference type="SUPFAM" id="SSF46894">
    <property type="entry name" value="C-terminal effector domain of the bipartite response regulators"/>
    <property type="match status" value="1"/>
</dbReference>
<dbReference type="SUPFAM" id="SSF52172">
    <property type="entry name" value="CheY-like"/>
    <property type="match status" value="1"/>
</dbReference>
<dbReference type="PROSITE" id="PS00622">
    <property type="entry name" value="HTH_LUXR_1"/>
    <property type="match status" value="1"/>
</dbReference>
<dbReference type="PROSITE" id="PS50043">
    <property type="entry name" value="HTH_LUXR_2"/>
    <property type="match status" value="1"/>
</dbReference>
<dbReference type="PROSITE" id="PS50110">
    <property type="entry name" value="RESPONSE_REGULATORY"/>
    <property type="match status" value="1"/>
</dbReference>
<comment type="subcellular location">
    <subcellularLocation>
        <location evidence="3">Cytoplasm</location>
    </subcellularLocation>
</comment>
<name>FIMZ_SALTY</name>
<feature type="chain" id="PRO_0000081286" description="Fimbriae Z protein">
    <location>
        <begin position="1"/>
        <end position="210"/>
    </location>
</feature>
<feature type="domain" description="Response regulatory" evidence="1">
    <location>
        <begin position="5"/>
        <end position="121"/>
    </location>
</feature>
<feature type="domain" description="HTH luxR-type" evidence="2">
    <location>
        <begin position="143"/>
        <end position="208"/>
    </location>
</feature>
<feature type="DNA-binding region" description="H-T-H motif" evidence="2">
    <location>
        <begin position="167"/>
        <end position="186"/>
    </location>
</feature>
<feature type="modified residue" description="4-aspartylphosphate" evidence="1">
    <location>
        <position position="56"/>
    </location>
</feature>
<evidence type="ECO:0000255" key="1">
    <source>
        <dbReference type="PROSITE-ProRule" id="PRU00169"/>
    </source>
</evidence>
<evidence type="ECO:0000255" key="2">
    <source>
        <dbReference type="PROSITE-ProRule" id="PRU00411"/>
    </source>
</evidence>
<evidence type="ECO:0000305" key="3"/>
<organism>
    <name type="scientific">Salmonella typhimurium (strain LT2 / SGSC1412 / ATCC 700720)</name>
    <dbReference type="NCBI Taxonomy" id="99287"/>
    <lineage>
        <taxon>Bacteria</taxon>
        <taxon>Pseudomonadati</taxon>
        <taxon>Pseudomonadota</taxon>
        <taxon>Gammaproteobacteria</taxon>
        <taxon>Enterobacterales</taxon>
        <taxon>Enterobacteriaceae</taxon>
        <taxon>Salmonella</taxon>
    </lineage>
</organism>
<reference key="1">
    <citation type="journal article" date="1992" name="J. Bacteriol.">
        <title>Identification of ancillary fim genes affecting fimA expression in Salmonella typhimurium.</title>
        <authorList>
            <person name="Swenson D.L."/>
            <person name="Clegg S."/>
        </authorList>
    </citation>
    <scope>NUCLEOTIDE SEQUENCE [GENOMIC DNA]</scope>
</reference>
<reference key="2">
    <citation type="submission" date="1993-06" db="EMBL/GenBank/DDBJ databases">
        <authorList>
            <person name="Swenson D.L."/>
            <person name="Clegg S."/>
        </authorList>
    </citation>
    <scope>NUCLEOTIDE SEQUENCE [GENOMIC DNA]</scope>
</reference>
<reference key="3">
    <citation type="journal article" date="2001" name="Nature">
        <title>Complete genome sequence of Salmonella enterica serovar Typhimurium LT2.</title>
        <authorList>
            <person name="McClelland M."/>
            <person name="Sanderson K.E."/>
            <person name="Spieth J."/>
            <person name="Clifton S.W."/>
            <person name="Latreille P."/>
            <person name="Courtney L."/>
            <person name="Porwollik S."/>
            <person name="Ali J."/>
            <person name="Dante M."/>
            <person name="Du F."/>
            <person name="Hou S."/>
            <person name="Layman D."/>
            <person name="Leonard S."/>
            <person name="Nguyen C."/>
            <person name="Scott K."/>
            <person name="Holmes A."/>
            <person name="Grewal N."/>
            <person name="Mulvaney E."/>
            <person name="Ryan E."/>
            <person name="Sun H."/>
            <person name="Florea L."/>
            <person name="Miller W."/>
            <person name="Stoneking T."/>
            <person name="Nhan M."/>
            <person name="Waterston R."/>
            <person name="Wilson R.K."/>
        </authorList>
    </citation>
    <scope>NUCLEOTIDE SEQUENCE [LARGE SCALE GENOMIC DNA]</scope>
    <source>
        <strain>LT2 / SGSC1412 / ATCC 700720</strain>
    </source>
</reference>
<protein>
    <recommendedName>
        <fullName>Fimbriae Z protein</fullName>
    </recommendedName>
</protein>
<gene>
    <name type="primary">fimZ</name>
    <name type="ordered locus">STM0549</name>
</gene>
<proteinExistence type="inferred from homology"/>
<keyword id="KW-0963">Cytoplasm</keyword>
<keyword id="KW-0238">DNA-binding</keyword>
<keyword id="KW-0597">Phosphoprotein</keyword>
<keyword id="KW-1185">Reference proteome</keyword>
<keyword id="KW-0804">Transcription</keyword>
<keyword id="KW-0805">Transcription regulation</keyword>
<keyword id="KW-0902">Two-component regulatory system</keyword>
<accession>P26319</accession>
<sequence length="210" mass="23546">MKPASVIIMDEHPIVRMSIEVLLGKNSNIQVVLKTDDSRTAIEYLRTYPVDLVILDIELPGTDGFTLLKRIKSIQEHTRILFLSSKSEAFYAGRAIRAGANGFVSKRKDLNDIYNAVKMILSGYSFFPSETLNFISNTRTPKGGHHDMPLSNREVTVLRYLANGMSNKEIAEQLLLSNKTISAHKANIFSKLGLHSIVELIDYAKSHELL</sequence>